<protein>
    <recommendedName>
        <fullName evidence="1">Potassium-transporting ATPase ATP-binding subunit</fullName>
        <ecNumber evidence="1">7.2.2.6</ecNumber>
    </recommendedName>
    <alternativeName>
        <fullName evidence="1">ATP phosphohydrolase [potassium-transporting] B chain</fullName>
    </alternativeName>
    <alternativeName>
        <fullName evidence="1">Potassium-binding and translocating subunit B</fullName>
    </alternativeName>
    <alternativeName>
        <fullName evidence="1">Potassium-translocating ATPase B chain</fullName>
    </alternativeName>
</protein>
<feature type="chain" id="PRO_1000114968" description="Potassium-transporting ATPase ATP-binding subunit">
    <location>
        <begin position="1"/>
        <end position="688"/>
    </location>
</feature>
<feature type="transmembrane region" description="Helical" evidence="1">
    <location>
        <begin position="34"/>
        <end position="54"/>
    </location>
</feature>
<feature type="transmembrane region" description="Helical" evidence="1">
    <location>
        <begin position="62"/>
        <end position="82"/>
    </location>
</feature>
<feature type="transmembrane region" description="Helical" evidence="1">
    <location>
        <begin position="219"/>
        <end position="239"/>
    </location>
</feature>
<feature type="transmembrane region" description="Helical" evidence="1">
    <location>
        <begin position="260"/>
        <end position="280"/>
    </location>
</feature>
<feature type="transmembrane region" description="Helical" evidence="1">
    <location>
        <begin position="594"/>
        <end position="614"/>
    </location>
</feature>
<feature type="transmembrane region" description="Helical" evidence="1">
    <location>
        <begin position="622"/>
        <end position="642"/>
    </location>
</feature>
<feature type="transmembrane region" description="Helical" evidence="1">
    <location>
        <begin position="662"/>
        <end position="682"/>
    </location>
</feature>
<feature type="active site" description="4-aspartylphosphate intermediate" evidence="1">
    <location>
        <position position="313"/>
    </location>
</feature>
<feature type="binding site" evidence="1">
    <location>
        <position position="350"/>
    </location>
    <ligand>
        <name>ATP</name>
        <dbReference type="ChEBI" id="CHEBI:30616"/>
    </ligand>
</feature>
<feature type="binding site" evidence="1">
    <location>
        <position position="354"/>
    </location>
    <ligand>
        <name>ATP</name>
        <dbReference type="ChEBI" id="CHEBI:30616"/>
    </ligand>
</feature>
<feature type="binding site" evidence="1">
    <location>
        <begin position="383"/>
        <end position="390"/>
    </location>
    <ligand>
        <name>ATP</name>
        <dbReference type="ChEBI" id="CHEBI:30616"/>
    </ligand>
</feature>
<feature type="binding site" evidence="1">
    <location>
        <position position="401"/>
    </location>
    <ligand>
        <name>ATP</name>
        <dbReference type="ChEBI" id="CHEBI:30616"/>
    </ligand>
</feature>
<feature type="binding site" evidence="1">
    <location>
        <position position="524"/>
    </location>
    <ligand>
        <name>Mg(2+)</name>
        <dbReference type="ChEBI" id="CHEBI:18420"/>
    </ligand>
</feature>
<feature type="binding site" evidence="1">
    <location>
        <position position="528"/>
    </location>
    <ligand>
        <name>Mg(2+)</name>
        <dbReference type="ChEBI" id="CHEBI:18420"/>
    </ligand>
</feature>
<dbReference type="EC" id="7.2.2.6" evidence="1"/>
<dbReference type="EMBL" id="CP000950">
    <property type="protein sequence ID" value="ACA67456.1"/>
    <property type="molecule type" value="Genomic_DNA"/>
</dbReference>
<dbReference type="RefSeq" id="WP_012104771.1">
    <property type="nucleotide sequence ID" value="NZ_CP009792.1"/>
</dbReference>
<dbReference type="SMR" id="B1JR96"/>
<dbReference type="KEGG" id="ypy:YPK_1158"/>
<dbReference type="PATRIC" id="fig|502800.11.peg.1794"/>
<dbReference type="GO" id="GO:0005886">
    <property type="term" value="C:plasma membrane"/>
    <property type="evidence" value="ECO:0007669"/>
    <property type="project" value="UniProtKB-SubCell"/>
</dbReference>
<dbReference type="GO" id="GO:0005524">
    <property type="term" value="F:ATP binding"/>
    <property type="evidence" value="ECO:0007669"/>
    <property type="project" value="UniProtKB-UniRule"/>
</dbReference>
<dbReference type="GO" id="GO:0016887">
    <property type="term" value="F:ATP hydrolysis activity"/>
    <property type="evidence" value="ECO:0007669"/>
    <property type="project" value="InterPro"/>
</dbReference>
<dbReference type="GO" id="GO:0000287">
    <property type="term" value="F:magnesium ion binding"/>
    <property type="evidence" value="ECO:0007669"/>
    <property type="project" value="UniProtKB-UniRule"/>
</dbReference>
<dbReference type="GO" id="GO:0008556">
    <property type="term" value="F:P-type potassium transmembrane transporter activity"/>
    <property type="evidence" value="ECO:0007669"/>
    <property type="project" value="UniProtKB-UniRule"/>
</dbReference>
<dbReference type="CDD" id="cd02078">
    <property type="entry name" value="P-type_ATPase_K"/>
    <property type="match status" value="1"/>
</dbReference>
<dbReference type="FunFam" id="2.70.150.10:FF:000010">
    <property type="entry name" value="Potassium-transporting ATPase ATP-binding subunit"/>
    <property type="match status" value="1"/>
</dbReference>
<dbReference type="FunFam" id="3.40.1110.10:FF:000007">
    <property type="entry name" value="Potassium-transporting ATPase ATP-binding subunit"/>
    <property type="match status" value="1"/>
</dbReference>
<dbReference type="Gene3D" id="3.40.1110.10">
    <property type="entry name" value="Calcium-transporting ATPase, cytoplasmic domain N"/>
    <property type="match status" value="1"/>
</dbReference>
<dbReference type="Gene3D" id="2.70.150.10">
    <property type="entry name" value="Calcium-transporting ATPase, cytoplasmic transduction domain A"/>
    <property type="match status" value="1"/>
</dbReference>
<dbReference type="Gene3D" id="3.40.50.1000">
    <property type="entry name" value="HAD superfamily/HAD-like"/>
    <property type="match status" value="1"/>
</dbReference>
<dbReference type="HAMAP" id="MF_00285">
    <property type="entry name" value="KdpB"/>
    <property type="match status" value="1"/>
</dbReference>
<dbReference type="InterPro" id="IPR023299">
    <property type="entry name" value="ATPase_P-typ_cyto_dom_N"/>
</dbReference>
<dbReference type="InterPro" id="IPR018303">
    <property type="entry name" value="ATPase_P-typ_P_site"/>
</dbReference>
<dbReference type="InterPro" id="IPR023298">
    <property type="entry name" value="ATPase_P-typ_TM_dom_sf"/>
</dbReference>
<dbReference type="InterPro" id="IPR008250">
    <property type="entry name" value="ATPase_P-typ_transduc_dom_A_sf"/>
</dbReference>
<dbReference type="InterPro" id="IPR036412">
    <property type="entry name" value="HAD-like_sf"/>
</dbReference>
<dbReference type="InterPro" id="IPR023214">
    <property type="entry name" value="HAD_sf"/>
</dbReference>
<dbReference type="InterPro" id="IPR006391">
    <property type="entry name" value="P-type_ATPase_bsu_IA"/>
</dbReference>
<dbReference type="InterPro" id="IPR001757">
    <property type="entry name" value="P_typ_ATPase"/>
</dbReference>
<dbReference type="InterPro" id="IPR044492">
    <property type="entry name" value="P_typ_ATPase_HD_dom"/>
</dbReference>
<dbReference type="NCBIfam" id="TIGR01494">
    <property type="entry name" value="ATPase_P-type"/>
    <property type="match status" value="2"/>
</dbReference>
<dbReference type="NCBIfam" id="TIGR01497">
    <property type="entry name" value="kdpB"/>
    <property type="match status" value="1"/>
</dbReference>
<dbReference type="PANTHER" id="PTHR43743">
    <property type="entry name" value="POTASSIUM-TRANSPORTING ATPASE ATP-BINDING SUBUNIT"/>
    <property type="match status" value="1"/>
</dbReference>
<dbReference type="PANTHER" id="PTHR43743:SF1">
    <property type="entry name" value="POTASSIUM-TRANSPORTING ATPASE ATP-BINDING SUBUNIT"/>
    <property type="match status" value="1"/>
</dbReference>
<dbReference type="Pfam" id="PF00122">
    <property type="entry name" value="E1-E2_ATPase"/>
    <property type="match status" value="1"/>
</dbReference>
<dbReference type="Pfam" id="PF00702">
    <property type="entry name" value="Hydrolase"/>
    <property type="match status" value="1"/>
</dbReference>
<dbReference type="PRINTS" id="PR00119">
    <property type="entry name" value="CATATPASE"/>
</dbReference>
<dbReference type="SFLD" id="SFLDS00003">
    <property type="entry name" value="Haloacid_Dehalogenase"/>
    <property type="match status" value="1"/>
</dbReference>
<dbReference type="SFLD" id="SFLDF00027">
    <property type="entry name" value="p-type_atpase"/>
    <property type="match status" value="1"/>
</dbReference>
<dbReference type="SUPFAM" id="SSF81653">
    <property type="entry name" value="Calcium ATPase, transduction domain A"/>
    <property type="match status" value="1"/>
</dbReference>
<dbReference type="SUPFAM" id="SSF81665">
    <property type="entry name" value="Calcium ATPase, transmembrane domain M"/>
    <property type="match status" value="1"/>
</dbReference>
<dbReference type="SUPFAM" id="SSF56784">
    <property type="entry name" value="HAD-like"/>
    <property type="match status" value="1"/>
</dbReference>
<dbReference type="SUPFAM" id="SSF81660">
    <property type="entry name" value="Metal cation-transporting ATPase, ATP-binding domain N"/>
    <property type="match status" value="1"/>
</dbReference>
<dbReference type="PROSITE" id="PS00154">
    <property type="entry name" value="ATPASE_E1_E2"/>
    <property type="match status" value="1"/>
</dbReference>
<comment type="function">
    <text evidence="1">Part of the high-affinity ATP-driven potassium transport (or Kdp) system, which catalyzes the hydrolysis of ATP coupled with the electrogenic transport of potassium into the cytoplasm. This subunit is responsible for energy coupling to the transport system and for the release of the potassium ions to the cytoplasm.</text>
</comment>
<comment type="catalytic activity">
    <reaction evidence="1">
        <text>K(+)(out) + ATP + H2O = K(+)(in) + ADP + phosphate + H(+)</text>
        <dbReference type="Rhea" id="RHEA:16777"/>
        <dbReference type="ChEBI" id="CHEBI:15377"/>
        <dbReference type="ChEBI" id="CHEBI:15378"/>
        <dbReference type="ChEBI" id="CHEBI:29103"/>
        <dbReference type="ChEBI" id="CHEBI:30616"/>
        <dbReference type="ChEBI" id="CHEBI:43474"/>
        <dbReference type="ChEBI" id="CHEBI:456216"/>
        <dbReference type="EC" id="7.2.2.6"/>
    </reaction>
    <physiologicalReaction direction="left-to-right" evidence="1">
        <dbReference type="Rhea" id="RHEA:16778"/>
    </physiologicalReaction>
</comment>
<comment type="subunit">
    <text evidence="1">The system is composed of three essential subunits: KdpA, KdpB and KdpC.</text>
</comment>
<comment type="subcellular location">
    <subcellularLocation>
        <location evidence="1">Cell inner membrane</location>
        <topology evidence="1">Multi-pass membrane protein</topology>
    </subcellularLocation>
</comment>
<comment type="similarity">
    <text evidence="1">Belongs to the cation transport ATPase (P-type) (TC 3.A.3) family. Type IA subfamily.</text>
</comment>
<name>KDPB_YERPY</name>
<gene>
    <name evidence="1" type="primary">kdpB</name>
    <name type="ordered locus">YPK_1158</name>
</gene>
<accession>B1JR96</accession>
<proteinExistence type="inferred from homology"/>
<evidence type="ECO:0000255" key="1">
    <source>
        <dbReference type="HAMAP-Rule" id="MF_00285"/>
    </source>
</evidence>
<sequence length="688" mass="72948">MTHKQRAIFEPTLVRTALLDAVKKLDPRVQWRNPVMFVVYLGSWLTTLIWLAILSGHTTGSAMFTGSIALWLWFTVLFANMAEALAEGRSKAQAASLRGVKKTSWAKKLSEARVDAPQEKVSADSLRKGDLVLIEAGDTVPCDGEVLEGGASVDESAITGESAPVIRESGGDFSSVTGGTRVLSDWLVVECRVNPGETFLDRMIAMVEGAKRRKTPNEVALTILLVALTIVFLLATATLYPFSVFSVEASQAGSPVTITVLVALLVCLIPTTIGGLLSAIGVAGMSRMLGANVIATSGRAVEAAGDVDVLLLDKTGTITLGNRQASEFLPAPGVTEQQLADAAQLSSLADETPEGRSIVVLAKQRFNLRERDLHSLNATFIPFSAQTRMSGVNVQERMIRKGAVDAIRRHVESNQGHFPPAVDDLVASVARTGGTPLVVAEGSRVLGVVALKDIVKGGIKERFAELRKMGIKTVMITGDNRLTAAAIAAEAGVDDFLAEATPEAKLALIRQYQAEGRLVAMTGDGTNDAPALAQADVAVAMNSGTQAAKEAGNMVDLDSNPTKLIEVVHIGKQMLMTRGSLTTFSIANDVAKYFAIIPAAFAATYPQLNALNIMQLHSPSSAILSAVIFNALVIVFLIPLALKGVSYKAMSAAALLRRNLWIYGLGGLLVPFVGIKLIDLLLTALNMG</sequence>
<reference key="1">
    <citation type="submission" date="2008-02" db="EMBL/GenBank/DDBJ databases">
        <title>Complete sequence of Yersinia pseudotuberculosis YPIII.</title>
        <authorList>
            <consortium name="US DOE Joint Genome Institute"/>
            <person name="Copeland A."/>
            <person name="Lucas S."/>
            <person name="Lapidus A."/>
            <person name="Glavina del Rio T."/>
            <person name="Dalin E."/>
            <person name="Tice H."/>
            <person name="Bruce D."/>
            <person name="Goodwin L."/>
            <person name="Pitluck S."/>
            <person name="Munk A.C."/>
            <person name="Brettin T."/>
            <person name="Detter J.C."/>
            <person name="Han C."/>
            <person name="Tapia R."/>
            <person name="Schmutz J."/>
            <person name="Larimer F."/>
            <person name="Land M."/>
            <person name="Hauser L."/>
            <person name="Challacombe J.F."/>
            <person name="Green L."/>
            <person name="Lindler L.E."/>
            <person name="Nikolich M.P."/>
            <person name="Richardson P."/>
        </authorList>
    </citation>
    <scope>NUCLEOTIDE SEQUENCE [LARGE SCALE GENOMIC DNA]</scope>
    <source>
        <strain>YPIII</strain>
    </source>
</reference>
<keyword id="KW-0067">ATP-binding</keyword>
<keyword id="KW-0997">Cell inner membrane</keyword>
<keyword id="KW-1003">Cell membrane</keyword>
<keyword id="KW-0406">Ion transport</keyword>
<keyword id="KW-0460">Magnesium</keyword>
<keyword id="KW-0472">Membrane</keyword>
<keyword id="KW-0479">Metal-binding</keyword>
<keyword id="KW-0547">Nucleotide-binding</keyword>
<keyword id="KW-0597">Phosphoprotein</keyword>
<keyword id="KW-0630">Potassium</keyword>
<keyword id="KW-0633">Potassium transport</keyword>
<keyword id="KW-1278">Translocase</keyword>
<keyword id="KW-0812">Transmembrane</keyword>
<keyword id="KW-1133">Transmembrane helix</keyword>
<keyword id="KW-0813">Transport</keyword>
<organism>
    <name type="scientific">Yersinia pseudotuberculosis serotype O:3 (strain YPIII)</name>
    <dbReference type="NCBI Taxonomy" id="502800"/>
    <lineage>
        <taxon>Bacteria</taxon>
        <taxon>Pseudomonadati</taxon>
        <taxon>Pseudomonadota</taxon>
        <taxon>Gammaproteobacteria</taxon>
        <taxon>Enterobacterales</taxon>
        <taxon>Yersiniaceae</taxon>
        <taxon>Yersinia</taxon>
    </lineage>
</organism>